<organism>
    <name type="scientific">Francisella philomiragia subsp. philomiragia (strain ATCC 25017 / CCUG 19701 / FSC 153 / O#319-036)</name>
    <dbReference type="NCBI Taxonomy" id="484022"/>
    <lineage>
        <taxon>Bacteria</taxon>
        <taxon>Pseudomonadati</taxon>
        <taxon>Pseudomonadota</taxon>
        <taxon>Gammaproteobacteria</taxon>
        <taxon>Thiotrichales</taxon>
        <taxon>Francisellaceae</taxon>
        <taxon>Francisella</taxon>
    </lineage>
</organism>
<reference key="1">
    <citation type="submission" date="2007-12" db="EMBL/GenBank/DDBJ databases">
        <title>Complete sequence of chromosome of Francisella philomiragia subsp. philomiragia ATCC 25017.</title>
        <authorList>
            <consortium name="US DOE Joint Genome Institute"/>
            <person name="Copeland A."/>
            <person name="Lucas S."/>
            <person name="Lapidus A."/>
            <person name="Barry K."/>
            <person name="Detter J.C."/>
            <person name="Glavina del Rio T."/>
            <person name="Hammon N."/>
            <person name="Israni S."/>
            <person name="Dalin E."/>
            <person name="Tice H."/>
            <person name="Pitluck S."/>
            <person name="Chain P."/>
            <person name="Malfatti S."/>
            <person name="Shin M."/>
            <person name="Vergez L."/>
            <person name="Schmutz J."/>
            <person name="Larimer F."/>
            <person name="Land M."/>
            <person name="Hauser L."/>
            <person name="Richardson P."/>
        </authorList>
    </citation>
    <scope>NUCLEOTIDE SEQUENCE [LARGE SCALE GENOMIC DNA]</scope>
    <source>
        <strain>ATCC 25017 / CCUG 19701 / FSC 153 / O#319-036</strain>
    </source>
</reference>
<name>Y1080_FRAP2</name>
<accession>B0TX40</accession>
<evidence type="ECO:0000255" key="1">
    <source>
        <dbReference type="HAMAP-Rule" id="MF_00652"/>
    </source>
</evidence>
<feature type="chain" id="PRO_1000082768" description="UPF0246 protein Fphi_1075">
    <location>
        <begin position="1"/>
        <end position="254"/>
    </location>
</feature>
<dbReference type="EMBL" id="CP000937">
    <property type="protein sequence ID" value="ABZ87298.1"/>
    <property type="molecule type" value="Genomic_DNA"/>
</dbReference>
<dbReference type="SMR" id="B0TX40"/>
<dbReference type="KEGG" id="fph:Fphi_1075"/>
<dbReference type="eggNOG" id="COG3022">
    <property type="taxonomic scope" value="Bacteria"/>
</dbReference>
<dbReference type="HOGENOM" id="CLU_061989_0_0_6"/>
<dbReference type="GO" id="GO:0005829">
    <property type="term" value="C:cytosol"/>
    <property type="evidence" value="ECO:0007669"/>
    <property type="project" value="TreeGrafter"/>
</dbReference>
<dbReference type="GO" id="GO:0033194">
    <property type="term" value="P:response to hydroperoxide"/>
    <property type="evidence" value="ECO:0007669"/>
    <property type="project" value="TreeGrafter"/>
</dbReference>
<dbReference type="HAMAP" id="MF_00652">
    <property type="entry name" value="UPF0246"/>
    <property type="match status" value="1"/>
</dbReference>
<dbReference type="InterPro" id="IPR005583">
    <property type="entry name" value="YaaA"/>
</dbReference>
<dbReference type="NCBIfam" id="NF002542">
    <property type="entry name" value="PRK02101.1-3"/>
    <property type="match status" value="1"/>
</dbReference>
<dbReference type="PANTHER" id="PTHR30283:SF4">
    <property type="entry name" value="PEROXIDE STRESS RESISTANCE PROTEIN YAAA"/>
    <property type="match status" value="1"/>
</dbReference>
<dbReference type="PANTHER" id="PTHR30283">
    <property type="entry name" value="PEROXIDE STRESS RESPONSE PROTEIN YAAA"/>
    <property type="match status" value="1"/>
</dbReference>
<dbReference type="Pfam" id="PF03883">
    <property type="entry name" value="H2O2_YaaD"/>
    <property type="match status" value="1"/>
</dbReference>
<comment type="similarity">
    <text evidence="1">Belongs to the UPF0246 family.</text>
</comment>
<protein>
    <recommendedName>
        <fullName evidence="1">UPF0246 protein Fphi_1075</fullName>
    </recommendedName>
</protein>
<sequence length="254" mass="29601">MIIVISPAKSQNFETATAKYQFTQPIFKDQITKLINTLKHYEVDEIEKLMKISPKLAEEVFTKHNNFDPKSYSELNSKAAIFTFSGDVYKGLEADTLDKKTIEYAQNHLLMLSGLYGLIRPLDLMQAYRLEMGTKIKIDGEILYKYWQDKITAQLNEYFNQQQNKILINLASNEYSQAIDKKSLDAKWLDIDFKENKNGTYKTIGIHAKKARGLMTRYILENRIENISDIKKFNVADYKFNLELSNENLMCFTR</sequence>
<gene>
    <name type="ordered locus">Fphi_1075</name>
</gene>
<proteinExistence type="inferred from homology"/>